<organism>
    <name type="scientific">Xenopus laevis</name>
    <name type="common">African clawed frog</name>
    <dbReference type="NCBI Taxonomy" id="8355"/>
    <lineage>
        <taxon>Eukaryota</taxon>
        <taxon>Metazoa</taxon>
        <taxon>Chordata</taxon>
        <taxon>Craniata</taxon>
        <taxon>Vertebrata</taxon>
        <taxon>Euteleostomi</taxon>
        <taxon>Amphibia</taxon>
        <taxon>Batrachia</taxon>
        <taxon>Anura</taxon>
        <taxon>Pipoidea</taxon>
        <taxon>Pipidae</taxon>
        <taxon>Xenopodinae</taxon>
        <taxon>Xenopus</taxon>
        <taxon>Xenopus</taxon>
    </lineage>
</organism>
<proteinExistence type="evidence at transcript level"/>
<protein>
    <recommendedName>
        <fullName>Microtubule-associated protein RP/EB family member 2</fullName>
    </recommendedName>
</protein>
<name>MARE2_XENLA</name>
<keyword id="KW-0131">Cell cycle</keyword>
<keyword id="KW-0132">Cell division</keyword>
<keyword id="KW-0963">Cytoplasm</keyword>
<keyword id="KW-0206">Cytoskeleton</keyword>
<keyword id="KW-0493">Microtubule</keyword>
<keyword id="KW-0498">Mitosis</keyword>
<keyword id="KW-1185">Reference proteome</keyword>
<gene>
    <name type="primary">mapre2</name>
</gene>
<feature type="chain" id="PRO_0000213426" description="Microtubule-associated protein RP/EB family member 2">
    <location>
        <begin position="1"/>
        <end position="327"/>
    </location>
</feature>
<feature type="domain" description="Calponin-homology (CH)" evidence="2">
    <location>
        <begin position="56"/>
        <end position="158"/>
    </location>
</feature>
<feature type="domain" description="EB1 C-terminal" evidence="3">
    <location>
        <begin position="234"/>
        <end position="304"/>
    </location>
</feature>
<feature type="region of interest" description="Disordered" evidence="4">
    <location>
        <begin position="1"/>
        <end position="20"/>
    </location>
</feature>
<feature type="region of interest" description="Disordered" evidence="4">
    <location>
        <begin position="170"/>
        <end position="238"/>
    </location>
</feature>
<feature type="region of interest" description="Disordered" evidence="4">
    <location>
        <begin position="295"/>
        <end position="327"/>
    </location>
</feature>
<feature type="compositionally biased region" description="Polar residues" evidence="4">
    <location>
        <begin position="1"/>
        <end position="17"/>
    </location>
</feature>
<comment type="function">
    <text evidence="1">May be involved in microtubule polymerization, and spindle function by stabilizing microtubules and anchoring them at centrosomes.</text>
</comment>
<comment type="subcellular location">
    <subcellularLocation>
        <location evidence="1">Cytoplasm</location>
    </subcellularLocation>
    <subcellularLocation>
        <location evidence="1">Cytoplasm</location>
        <location evidence="1">Cytoskeleton</location>
    </subcellularLocation>
    <text evidence="1">Associated with the microtubule network.</text>
</comment>
<comment type="domain">
    <text evidence="1">The N-terminal domain may form a hydrophobic cleft involved in microtubule binding and the C-terminal may be involved in the formation of mutually exclusive complexes with APC and DCTN1.</text>
</comment>
<comment type="similarity">
    <text evidence="5">Belongs to the MAPRE family.</text>
</comment>
<evidence type="ECO:0000250" key="1"/>
<evidence type="ECO:0000255" key="2">
    <source>
        <dbReference type="PROSITE-ProRule" id="PRU00044"/>
    </source>
</evidence>
<evidence type="ECO:0000255" key="3">
    <source>
        <dbReference type="PROSITE-ProRule" id="PRU00576"/>
    </source>
</evidence>
<evidence type="ECO:0000256" key="4">
    <source>
        <dbReference type="SAM" id="MobiDB-lite"/>
    </source>
</evidence>
<evidence type="ECO:0000305" key="5"/>
<dbReference type="EMBL" id="BC044671">
    <property type="protein sequence ID" value="AAH44671.1"/>
    <property type="molecule type" value="mRNA"/>
</dbReference>
<dbReference type="RefSeq" id="NP_001079198.1">
    <property type="nucleotide sequence ID" value="NM_001085729.1"/>
</dbReference>
<dbReference type="SMR" id="Q7ZXP1"/>
<dbReference type="BioGRID" id="97026">
    <property type="interactions" value="2"/>
</dbReference>
<dbReference type="DNASU" id="373805"/>
<dbReference type="GeneID" id="373805"/>
<dbReference type="KEGG" id="xla:373805"/>
<dbReference type="AGR" id="Xenbase:XB-GENE-6252421"/>
<dbReference type="CTD" id="373805"/>
<dbReference type="Xenbase" id="XB-GENE-6252421">
    <property type="gene designation" value="mapre2.S"/>
</dbReference>
<dbReference type="OrthoDB" id="2119228at2759"/>
<dbReference type="Proteomes" id="UP000186698">
    <property type="component" value="Chromosome 6S"/>
</dbReference>
<dbReference type="Bgee" id="373805">
    <property type="expression patterns" value="Expressed in brain and 19 other cell types or tissues"/>
</dbReference>
<dbReference type="GO" id="GO:0005881">
    <property type="term" value="C:cytoplasmic microtubule"/>
    <property type="evidence" value="ECO:0000318"/>
    <property type="project" value="GO_Central"/>
</dbReference>
<dbReference type="GO" id="GO:0005815">
    <property type="term" value="C:microtubule organizing center"/>
    <property type="evidence" value="ECO:0000318"/>
    <property type="project" value="GO_Central"/>
</dbReference>
<dbReference type="GO" id="GO:0035371">
    <property type="term" value="C:microtubule plus-end"/>
    <property type="evidence" value="ECO:0000318"/>
    <property type="project" value="GO_Central"/>
</dbReference>
<dbReference type="GO" id="GO:0051233">
    <property type="term" value="C:spindle midzone"/>
    <property type="evidence" value="ECO:0000318"/>
    <property type="project" value="GO_Central"/>
</dbReference>
<dbReference type="GO" id="GO:0051010">
    <property type="term" value="F:microtubule plus-end binding"/>
    <property type="evidence" value="ECO:0000318"/>
    <property type="project" value="GO_Central"/>
</dbReference>
<dbReference type="GO" id="GO:0051301">
    <property type="term" value="P:cell division"/>
    <property type="evidence" value="ECO:0007669"/>
    <property type="project" value="UniProtKB-KW"/>
</dbReference>
<dbReference type="GO" id="GO:0035372">
    <property type="term" value="P:protein localization to microtubule"/>
    <property type="evidence" value="ECO:0000318"/>
    <property type="project" value="GO_Central"/>
</dbReference>
<dbReference type="GO" id="GO:0031110">
    <property type="term" value="P:regulation of microtubule polymerization or depolymerization"/>
    <property type="evidence" value="ECO:0000318"/>
    <property type="project" value="GO_Central"/>
</dbReference>
<dbReference type="GO" id="GO:0051225">
    <property type="term" value="P:spindle assembly"/>
    <property type="evidence" value="ECO:0000318"/>
    <property type="project" value="GO_Central"/>
</dbReference>
<dbReference type="FunFam" id="1.20.5.1430:FF:000002">
    <property type="entry name" value="microtubule-associated protein RP/EB family member 2 isoform X1"/>
    <property type="match status" value="1"/>
</dbReference>
<dbReference type="FunFam" id="1.10.418.10:FF:000007">
    <property type="entry name" value="Microtubule-associated protein, RP/EB family, member 2"/>
    <property type="match status" value="1"/>
</dbReference>
<dbReference type="Gene3D" id="1.20.5.1430">
    <property type="match status" value="1"/>
</dbReference>
<dbReference type="Gene3D" id="1.10.418.10">
    <property type="entry name" value="Calponin-like domain"/>
    <property type="match status" value="1"/>
</dbReference>
<dbReference type="InterPro" id="IPR001715">
    <property type="entry name" value="CH_dom"/>
</dbReference>
<dbReference type="InterPro" id="IPR036872">
    <property type="entry name" value="CH_dom_sf"/>
</dbReference>
<dbReference type="InterPro" id="IPR004953">
    <property type="entry name" value="EB1_C"/>
</dbReference>
<dbReference type="InterPro" id="IPR036133">
    <property type="entry name" value="EB1_C_sf"/>
</dbReference>
<dbReference type="InterPro" id="IPR027328">
    <property type="entry name" value="MAPRE"/>
</dbReference>
<dbReference type="PANTHER" id="PTHR10623">
    <property type="entry name" value="MICROTUBULE-ASSOCIATED PROTEIN RP/EB FAMILY MEMBER"/>
    <property type="match status" value="1"/>
</dbReference>
<dbReference type="Pfam" id="PF00307">
    <property type="entry name" value="CH"/>
    <property type="match status" value="1"/>
</dbReference>
<dbReference type="Pfam" id="PF03271">
    <property type="entry name" value="EB1"/>
    <property type="match status" value="1"/>
</dbReference>
<dbReference type="SUPFAM" id="SSF47576">
    <property type="entry name" value="Calponin-homology domain, CH-domain"/>
    <property type="match status" value="1"/>
</dbReference>
<dbReference type="SUPFAM" id="SSF140612">
    <property type="entry name" value="EB1 dimerisation domain-like"/>
    <property type="match status" value="1"/>
</dbReference>
<dbReference type="PROSITE" id="PS50021">
    <property type="entry name" value="CH"/>
    <property type="match status" value="1"/>
</dbReference>
<dbReference type="PROSITE" id="PS51230">
    <property type="entry name" value="EB1_C"/>
    <property type="match status" value="1"/>
</dbReference>
<accession>Q7ZXP1</accession>
<sequence length="327" mass="37264">MPGPTQTLSPNGENNNDVIHDNGTIIPFRKHTVRGERSYSWGMAVNVYSTSITQETMSRHDIIAWVNDIVCLNYIKVEQLSSGAAYCQFMDMLFPGCISLKKVKFQAKLEHEYIHNFKLLQASFKRMNVDKVIPVEKLVKGRFQDNLDFIQWFKKFFDANYDGKEYDPMEARQGQDALPPPDPGEQIFNLPKKPHHANSPTAGAARSSPIAKPGSTSSRPSSAKKAVPCPSVKSDKDLETQVSHLNEQVHSLKIALEGVEKERDFYFGKLREIELLCQEHGQEGDDLLQRLMDILYSSEEQESHTEQHEGEEEQEHGHEEAEQQEEY</sequence>
<reference key="1">
    <citation type="submission" date="2003-01" db="EMBL/GenBank/DDBJ databases">
        <authorList>
            <consortium name="NIH - Xenopus Gene Collection (XGC) project"/>
        </authorList>
    </citation>
    <scope>NUCLEOTIDE SEQUENCE [LARGE SCALE MRNA]</scope>
    <source>
        <tissue>Embryo</tissue>
    </source>
</reference>